<name>RM08_YEAST</name>
<proteinExistence type="evidence at protein level"/>
<comment type="function">
    <text evidence="10 11">Component of the mitochondrial ribosome (mitoribosome), a dedicated translation machinery responsible for the synthesis of mitochondrial genome-encoded proteins, including at least some of the essential transmembrane subunits of the mitochondrial respiratory chain. The mitoribosomes are attached to the mitochondrial inner membrane and translation products are cotranslationally integrated into the membrane.</text>
</comment>
<comment type="subunit">
    <text evidence="1 6">Component of the mitochondrial large ribosomal subunit (mt-LSU). Mature yeast 74S mitochondrial ribosomes consist of a small (37S) and a large (54S) subunit. The 37S small subunit contains a 15S ribosomal RNA (15S mt-rRNA) and 34 different proteins. The 54S large subunit contains a 21S rRNA (21S mt-rRNA) and 46 different proteins.</text>
</comment>
<comment type="subcellular location">
    <subcellularLocation>
        <location evidence="2 4">Mitochondrion</location>
    </subcellularLocation>
    <text evidence="7">Mitoribosomes are tethered to the mitochondrial inner membrane and spatially aligned with the membrane insertion machinery through two distinct membrane contact sites, formed by the 21S rRNA expansion segment 96-ES1 and the inner membrane protein MBA1.</text>
</comment>
<comment type="miscellaneous">
    <text>Although this protein has evidently no mitochondrial targeting pre-sequence, it is efficiently transported into mitochondria.</text>
</comment>
<comment type="miscellaneous">
    <text evidence="3">Present with 3000 molecules/cell in log phase SD medium.</text>
</comment>
<comment type="similarity">
    <text evidence="9">Belongs to the bacterial ribosomal protein bL17 family.</text>
</comment>
<feature type="initiator methionine" description="Removed" evidence="5">
    <location>
        <position position="1"/>
    </location>
</feature>
<feature type="chain" id="PRO_0000175550" description="Large ribosomal subunit protein bL17m">
    <location>
        <begin position="2"/>
        <end position="238"/>
    </location>
</feature>
<feature type="sequence conflict" description="In Ref. 1; AA sequence." evidence="9" ref="1">
    <original>T</original>
    <variation>G</variation>
    <location>
        <position position="2"/>
    </location>
</feature>
<feature type="sequence conflict" description="In Ref. 1; CAA37834." evidence="9" ref="1">
    <original>D</original>
    <variation>G</variation>
    <location>
        <position position="82"/>
    </location>
</feature>
<keyword id="KW-0002">3D-structure</keyword>
<keyword id="KW-0903">Direct protein sequencing</keyword>
<keyword id="KW-0496">Mitochondrion</keyword>
<keyword id="KW-1185">Reference proteome</keyword>
<keyword id="KW-0687">Ribonucleoprotein</keyword>
<keyword id="KW-0689">Ribosomal protein</keyword>
<evidence type="ECO:0000269" key="1">
    <source>
    </source>
</evidence>
<evidence type="ECO:0000269" key="2">
    <source>
    </source>
</evidence>
<evidence type="ECO:0000269" key="3">
    <source>
    </source>
</evidence>
<evidence type="ECO:0000269" key="4">
    <source>
    </source>
</evidence>
<evidence type="ECO:0000269" key="5">
    <source>
    </source>
</evidence>
<evidence type="ECO:0000269" key="6">
    <source>
    </source>
</evidence>
<evidence type="ECO:0000269" key="7">
    <source>
    </source>
</evidence>
<evidence type="ECO:0000303" key="8">
    <source>
    </source>
</evidence>
<evidence type="ECO:0000305" key="9"/>
<evidence type="ECO:0000305" key="10">
    <source>
    </source>
</evidence>
<evidence type="ECO:0000305" key="11">
    <source>
    </source>
</evidence>
<reference key="1">
    <citation type="journal article" date="1990" name="Nucleic Acids Res.">
        <title>Cloning and characterization of nuclear genes for two mitochondrial ribosomal proteins in Saccharomyces cerevisiae.</title>
        <authorList>
            <person name="Kitakawa M."/>
            <person name="Grohmann L."/>
            <person name="Graack H.-R."/>
            <person name="Isono K."/>
        </authorList>
    </citation>
    <scope>NUCLEOTIDE SEQUENCE [GENOMIC DNA]</scope>
    <scope>PROTEIN SEQUENCE OF 2-28</scope>
    <source>
        <strain>07173</strain>
    </source>
</reference>
<reference key="2">
    <citation type="journal article" date="1995" name="Yeast">
        <title>Sequence of a 17.1 kb DNA fragment from chromosome X of Saccharomyces cerevisiae includes the mitochondrial ribosomal protein L8.</title>
        <authorList>
            <person name="Vandenbol M."/>
            <person name="Durand P."/>
            <person name="Dion C."/>
            <person name="Portetelle D."/>
            <person name="Hilger F."/>
        </authorList>
    </citation>
    <scope>NUCLEOTIDE SEQUENCE [GENOMIC DNA]</scope>
    <source>
        <strain>ATCC 204508 / S288c</strain>
    </source>
</reference>
<reference key="3">
    <citation type="journal article" date="1996" name="EMBO J.">
        <title>Complete nucleotide sequence of Saccharomyces cerevisiae chromosome X.</title>
        <authorList>
            <person name="Galibert F."/>
            <person name="Alexandraki D."/>
            <person name="Baur A."/>
            <person name="Boles E."/>
            <person name="Chalwatzis N."/>
            <person name="Chuat J.-C."/>
            <person name="Coster F."/>
            <person name="Cziepluch C."/>
            <person name="de Haan M."/>
            <person name="Domdey H."/>
            <person name="Durand P."/>
            <person name="Entian K.-D."/>
            <person name="Gatius M."/>
            <person name="Goffeau A."/>
            <person name="Grivell L.A."/>
            <person name="Hennemann A."/>
            <person name="Herbert C.J."/>
            <person name="Heumann K."/>
            <person name="Hilger F."/>
            <person name="Hollenberg C.P."/>
            <person name="Huang M.-E."/>
            <person name="Jacq C."/>
            <person name="Jauniaux J.-C."/>
            <person name="Katsoulou C."/>
            <person name="Kirchrath L."/>
            <person name="Kleine K."/>
            <person name="Kordes E."/>
            <person name="Koetter P."/>
            <person name="Liebl S."/>
            <person name="Louis E.J."/>
            <person name="Manus V."/>
            <person name="Mewes H.-W."/>
            <person name="Miosga T."/>
            <person name="Obermaier B."/>
            <person name="Perea J."/>
            <person name="Pohl T.M."/>
            <person name="Portetelle D."/>
            <person name="Pujol A."/>
            <person name="Purnelle B."/>
            <person name="Ramezani Rad M."/>
            <person name="Rasmussen S.W."/>
            <person name="Rose M."/>
            <person name="Rossau R."/>
            <person name="Schaaff-Gerstenschlaeger I."/>
            <person name="Smits P.H.M."/>
            <person name="Scarcez T."/>
            <person name="Soriano N."/>
            <person name="To Van D."/>
            <person name="Tzermia M."/>
            <person name="Van Broekhoven A."/>
            <person name="Vandenbol M."/>
            <person name="Wedler H."/>
            <person name="von Wettstein D."/>
            <person name="Wambutt R."/>
            <person name="Zagulski M."/>
            <person name="Zollner A."/>
            <person name="Karpfinger-Hartl L."/>
        </authorList>
    </citation>
    <scope>NUCLEOTIDE SEQUENCE [LARGE SCALE GENOMIC DNA]</scope>
    <source>
        <strain>ATCC 204508 / S288c</strain>
    </source>
</reference>
<reference key="4">
    <citation type="journal article" date="2014" name="G3 (Bethesda)">
        <title>The reference genome sequence of Saccharomyces cerevisiae: Then and now.</title>
        <authorList>
            <person name="Engel S.R."/>
            <person name="Dietrich F.S."/>
            <person name="Fisk D.G."/>
            <person name="Binkley G."/>
            <person name="Balakrishnan R."/>
            <person name="Costanzo M.C."/>
            <person name="Dwight S.S."/>
            <person name="Hitz B.C."/>
            <person name="Karra K."/>
            <person name="Nash R.S."/>
            <person name="Weng S."/>
            <person name="Wong E.D."/>
            <person name="Lloyd P."/>
            <person name="Skrzypek M.S."/>
            <person name="Miyasato S.R."/>
            <person name="Simison M."/>
            <person name="Cherry J.M."/>
        </authorList>
    </citation>
    <scope>GENOME REANNOTATION</scope>
    <source>
        <strain>ATCC 204508 / S288c</strain>
    </source>
</reference>
<reference key="5">
    <citation type="journal article" date="2007" name="Genome Res.">
        <title>Approaching a complete repository of sequence-verified protein-encoding clones for Saccharomyces cerevisiae.</title>
        <authorList>
            <person name="Hu Y."/>
            <person name="Rolfs A."/>
            <person name="Bhullar B."/>
            <person name="Murthy T.V.S."/>
            <person name="Zhu C."/>
            <person name="Berger M.F."/>
            <person name="Camargo A.A."/>
            <person name="Kelley F."/>
            <person name="McCarron S."/>
            <person name="Jepson D."/>
            <person name="Richardson A."/>
            <person name="Raphael J."/>
            <person name="Moreira D."/>
            <person name="Taycher E."/>
            <person name="Zuo D."/>
            <person name="Mohr S."/>
            <person name="Kane M.F."/>
            <person name="Williamson J."/>
            <person name="Simpson A.J.G."/>
            <person name="Bulyk M.L."/>
            <person name="Harlow E."/>
            <person name="Marsischky G."/>
            <person name="Kolodner R.D."/>
            <person name="LaBaer J."/>
        </authorList>
    </citation>
    <scope>NUCLEOTIDE SEQUENCE [GENOMIC DNA]</scope>
    <source>
        <strain>ATCC 204508 / S288c</strain>
    </source>
</reference>
<reference key="6">
    <citation type="journal article" date="1993" name="Eur. J. Biochem.">
        <title>Mitochondrial transport of mitoribosomal proteins, YmL8 and YmL20, in Saccharomyces cerevisiae.</title>
        <authorList>
            <person name="Matsushita Y."/>
            <person name="Isono K."/>
        </authorList>
    </citation>
    <scope>TRANSPORT INTO MITOCHONDRIA</scope>
</reference>
<reference key="7">
    <citation type="journal article" date="2002" name="Eur. J. Biochem.">
        <title>Tag-mediated isolation of yeast mitochondrial ribosome and mass spectrometric identification of its new components.</title>
        <authorList>
            <person name="Gan X."/>
            <person name="Kitakawa M."/>
            <person name="Yoshino K."/>
            <person name="Oshiro N."/>
            <person name="Yonezawa K."/>
            <person name="Isono K."/>
        </authorList>
    </citation>
    <scope>IDENTIFICATION IN THE MITOCHONDRIAL RIBOSOMAL LARGE COMPLEX</scope>
    <scope>IDENTIFICATION BY MASS SPECTROMETRY</scope>
</reference>
<reference key="8">
    <citation type="journal article" date="2003" name="Nature">
        <title>Global analysis of protein localization in budding yeast.</title>
        <authorList>
            <person name="Huh W.-K."/>
            <person name="Falvo J.V."/>
            <person name="Gerke L.C."/>
            <person name="Carroll A.S."/>
            <person name="Howson R.W."/>
            <person name="Weissman J.S."/>
            <person name="O'Shea E.K."/>
        </authorList>
    </citation>
    <scope>SUBCELLULAR LOCATION [LARGE SCALE ANALYSIS]</scope>
</reference>
<reference key="9">
    <citation type="journal article" date="2003" name="Nature">
        <title>Global analysis of protein expression in yeast.</title>
        <authorList>
            <person name="Ghaemmaghami S."/>
            <person name="Huh W.-K."/>
            <person name="Bower K."/>
            <person name="Howson R.W."/>
            <person name="Belle A."/>
            <person name="Dephoure N."/>
            <person name="O'Shea E.K."/>
            <person name="Weissman J.S."/>
        </authorList>
    </citation>
    <scope>LEVEL OF PROTEIN EXPRESSION [LARGE SCALE ANALYSIS]</scope>
</reference>
<reference key="10">
    <citation type="journal article" date="2003" name="Proc. Natl. Acad. Sci. U.S.A.">
        <title>The proteome of Saccharomyces cerevisiae mitochondria.</title>
        <authorList>
            <person name="Sickmann A."/>
            <person name="Reinders J."/>
            <person name="Wagner Y."/>
            <person name="Joppich C."/>
            <person name="Zahedi R.P."/>
            <person name="Meyer H.E."/>
            <person name="Schoenfisch B."/>
            <person name="Perschil I."/>
            <person name="Chacinska A."/>
            <person name="Guiard B."/>
            <person name="Rehling P."/>
            <person name="Pfanner N."/>
            <person name="Meisinger C."/>
        </authorList>
    </citation>
    <scope>SUBCELLULAR LOCATION [LARGE SCALE ANALYSIS]</scope>
    <source>
        <strain>ATCC 76625 / YPH499</strain>
    </source>
</reference>
<reference key="11">
    <citation type="journal article" date="2015" name="Nat. Commun.">
        <title>Organization of the mitochondrial translation machinery studied in situ by cryoelectron tomography.</title>
        <authorList>
            <person name="Pfeffer S."/>
            <person name="Woellhaf M.W."/>
            <person name="Herrmann J.M."/>
            <person name="Forster F."/>
        </authorList>
    </citation>
    <scope>SUBCELLULAR LOCATION</scope>
</reference>
<reference key="12">
    <citation type="journal article" date="2014" name="Science">
        <title>Structure of the yeast mitochondrial large ribosomal subunit.</title>
        <authorList>
            <person name="Amunts A."/>
            <person name="Brown A."/>
            <person name="Bai X.C."/>
            <person name="Llacer J.L."/>
            <person name="Hussain T."/>
            <person name="Emsley P."/>
            <person name="Long F."/>
            <person name="Murshudov G."/>
            <person name="Scheres S.H."/>
            <person name="Ramakrishnan V."/>
        </authorList>
    </citation>
    <scope>STRUCTURE BY ELECTRON MICROSCOPY (3.20 ANGSTROMS)</scope>
    <scope>SUBUNIT</scope>
</reference>
<protein>
    <recommendedName>
        <fullName evidence="8">Large ribosomal subunit protein bL17m</fullName>
    </recommendedName>
    <alternativeName>
        <fullName>54S ribosomal protein L8, mitochondrial</fullName>
    </alternativeName>
    <alternativeName>
        <fullName>YmL8</fullName>
    </alternativeName>
</protein>
<dbReference type="EMBL" id="X53841">
    <property type="protein sequence ID" value="CAA37834.1"/>
    <property type="molecule type" value="Genomic_DNA"/>
</dbReference>
<dbReference type="EMBL" id="Z34288">
    <property type="protein sequence ID" value="CAA84060.1"/>
    <property type="molecule type" value="Genomic_DNA"/>
</dbReference>
<dbReference type="EMBL" id="Z49338">
    <property type="protein sequence ID" value="CAA89354.1"/>
    <property type="molecule type" value="Genomic_DNA"/>
</dbReference>
<dbReference type="EMBL" id="AY558249">
    <property type="protein sequence ID" value="AAS56575.1"/>
    <property type="molecule type" value="Genomic_DNA"/>
</dbReference>
<dbReference type="EMBL" id="BK006943">
    <property type="protein sequence ID" value="DAA08734.1"/>
    <property type="molecule type" value="Genomic_DNA"/>
</dbReference>
<dbReference type="PIR" id="S50809">
    <property type="entry name" value="S50809"/>
</dbReference>
<dbReference type="RefSeq" id="NP_012472.1">
    <property type="nucleotide sequence ID" value="NM_001181496.1"/>
</dbReference>
<dbReference type="PDB" id="3J6B">
    <property type="method" value="EM"/>
    <property type="resolution" value="3.20 A"/>
    <property type="chains" value="L=1-238"/>
</dbReference>
<dbReference type="PDB" id="5MRC">
    <property type="method" value="EM"/>
    <property type="resolution" value="3.25 A"/>
    <property type="chains" value="L=2-238"/>
</dbReference>
<dbReference type="PDB" id="5MRE">
    <property type="method" value="EM"/>
    <property type="resolution" value="3.75 A"/>
    <property type="chains" value="L=2-238"/>
</dbReference>
<dbReference type="PDB" id="5MRF">
    <property type="method" value="EM"/>
    <property type="resolution" value="4.97 A"/>
    <property type="chains" value="L=2-238"/>
</dbReference>
<dbReference type="PDBsum" id="3J6B"/>
<dbReference type="PDBsum" id="5MRC"/>
<dbReference type="PDBsum" id="5MRE"/>
<dbReference type="PDBsum" id="5MRF"/>
<dbReference type="EMDB" id="EMD-3551"/>
<dbReference type="EMDB" id="EMD-3552"/>
<dbReference type="EMDB" id="EMD-3553"/>
<dbReference type="SMR" id="P22353"/>
<dbReference type="BioGRID" id="33690">
    <property type="interactions" value="172"/>
</dbReference>
<dbReference type="ComplexPortal" id="CPX-1602">
    <property type="entry name" value="54S mitochondrial large ribosomal subunit"/>
</dbReference>
<dbReference type="DIP" id="DIP-5672N"/>
<dbReference type="FunCoup" id="P22353">
    <property type="interactions" value="832"/>
</dbReference>
<dbReference type="IntAct" id="P22353">
    <property type="interactions" value="62"/>
</dbReference>
<dbReference type="MINT" id="P22353"/>
<dbReference type="STRING" id="4932.YJL063C"/>
<dbReference type="iPTMnet" id="P22353"/>
<dbReference type="PaxDb" id="4932-YJL063C"/>
<dbReference type="PeptideAtlas" id="P22353"/>
<dbReference type="EnsemblFungi" id="YJL063C_mRNA">
    <property type="protein sequence ID" value="YJL063C"/>
    <property type="gene ID" value="YJL063C"/>
</dbReference>
<dbReference type="GeneID" id="853382"/>
<dbReference type="KEGG" id="sce:YJL063C"/>
<dbReference type="AGR" id="SGD:S000003599"/>
<dbReference type="SGD" id="S000003599">
    <property type="gene designation" value="MRPL8"/>
</dbReference>
<dbReference type="VEuPathDB" id="FungiDB:YJL063C"/>
<dbReference type="eggNOG" id="KOG3280">
    <property type="taxonomic scope" value="Eukaryota"/>
</dbReference>
<dbReference type="GeneTree" id="ENSGT00390000010698"/>
<dbReference type="HOGENOM" id="CLU_074407_1_3_1"/>
<dbReference type="InParanoid" id="P22353"/>
<dbReference type="OMA" id="HIQTTYA"/>
<dbReference type="OrthoDB" id="275000at2759"/>
<dbReference type="BioCyc" id="YEAST:G3O-31525-MONOMER"/>
<dbReference type="BioGRID-ORCS" id="853382">
    <property type="hits" value="7 hits in 10 CRISPR screens"/>
</dbReference>
<dbReference type="PRO" id="PR:P22353"/>
<dbReference type="Proteomes" id="UP000002311">
    <property type="component" value="Chromosome X"/>
</dbReference>
<dbReference type="RNAct" id="P22353">
    <property type="molecule type" value="protein"/>
</dbReference>
<dbReference type="GO" id="GO:0005743">
    <property type="term" value="C:mitochondrial inner membrane"/>
    <property type="evidence" value="ECO:0000303"/>
    <property type="project" value="ComplexPortal"/>
</dbReference>
<dbReference type="GO" id="GO:0005762">
    <property type="term" value="C:mitochondrial large ribosomal subunit"/>
    <property type="evidence" value="ECO:0000314"/>
    <property type="project" value="SGD"/>
</dbReference>
<dbReference type="GO" id="GO:0005739">
    <property type="term" value="C:mitochondrion"/>
    <property type="evidence" value="ECO:0007005"/>
    <property type="project" value="SGD"/>
</dbReference>
<dbReference type="GO" id="GO:0003735">
    <property type="term" value="F:structural constituent of ribosome"/>
    <property type="evidence" value="ECO:0000314"/>
    <property type="project" value="SGD"/>
</dbReference>
<dbReference type="GO" id="GO:0032543">
    <property type="term" value="P:mitochondrial translation"/>
    <property type="evidence" value="ECO:0000303"/>
    <property type="project" value="ComplexPortal"/>
</dbReference>
<dbReference type="FunFam" id="3.90.1030.10:FF:000010">
    <property type="entry name" value="Mrpl8p"/>
    <property type="match status" value="1"/>
</dbReference>
<dbReference type="Gene3D" id="1.10.246.170">
    <property type="match status" value="1"/>
</dbReference>
<dbReference type="Gene3D" id="3.90.1030.10">
    <property type="entry name" value="Ribosomal protein L17"/>
    <property type="match status" value="1"/>
</dbReference>
<dbReference type="InterPro" id="IPR000456">
    <property type="entry name" value="Ribosomal_bL17"/>
</dbReference>
<dbReference type="InterPro" id="IPR047859">
    <property type="entry name" value="Ribosomal_bL17_CS"/>
</dbReference>
<dbReference type="InterPro" id="IPR036373">
    <property type="entry name" value="Ribosomal_bL17_sf"/>
</dbReference>
<dbReference type="InterPro" id="IPR040894">
    <property type="entry name" value="Ribosomal_bL17m_C"/>
</dbReference>
<dbReference type="NCBIfam" id="TIGR00059">
    <property type="entry name" value="L17"/>
    <property type="match status" value="1"/>
</dbReference>
<dbReference type="PANTHER" id="PTHR14413:SF16">
    <property type="entry name" value="LARGE RIBOSOMAL SUBUNIT PROTEIN BL17M"/>
    <property type="match status" value="1"/>
</dbReference>
<dbReference type="PANTHER" id="PTHR14413">
    <property type="entry name" value="RIBOSOMAL PROTEIN L17"/>
    <property type="match status" value="1"/>
</dbReference>
<dbReference type="Pfam" id="PF18502">
    <property type="entry name" value="Mrpl_C"/>
    <property type="match status" value="1"/>
</dbReference>
<dbReference type="Pfam" id="PF01196">
    <property type="entry name" value="Ribosomal_L17"/>
    <property type="match status" value="1"/>
</dbReference>
<dbReference type="SUPFAM" id="SSF64263">
    <property type="entry name" value="Prokaryotic ribosomal protein L17"/>
    <property type="match status" value="1"/>
</dbReference>
<dbReference type="PROSITE" id="PS01167">
    <property type="entry name" value="RIBOSOMAL_L17"/>
    <property type="match status" value="1"/>
</dbReference>
<gene>
    <name type="primary">MRPL8</name>
    <name type="ordered locus">YJL063C</name>
    <name type="ORF">HRD238</name>
    <name type="ORF">J1125</name>
</gene>
<sequence length="238" mass="26945">MTVGIARKLSRDKAHRDALLKNLACQLFQHESIVSTHAKCKEASRVAERIITWTKRAITTSNSVAQAELKSQIQSQLFLAGDNRKLMKRLFSEIAPRYLERPGGYTRVLRLEPRANDSAPQSVLELVDSPVMSESHTVNRGNLKMWLLVKSVINDDANQLPHNPLTLQNLHKVAKFKAEAQLHGEIMLIKQVLLKEMSLPYDEALENERTQALLKEVYSSSLPKKTKKPSSYVMVPRP</sequence>
<accession>P22353</accession>
<accession>D6VWB8</accession>
<organism>
    <name type="scientific">Saccharomyces cerevisiae (strain ATCC 204508 / S288c)</name>
    <name type="common">Baker's yeast</name>
    <dbReference type="NCBI Taxonomy" id="559292"/>
    <lineage>
        <taxon>Eukaryota</taxon>
        <taxon>Fungi</taxon>
        <taxon>Dikarya</taxon>
        <taxon>Ascomycota</taxon>
        <taxon>Saccharomycotina</taxon>
        <taxon>Saccharomycetes</taxon>
        <taxon>Saccharomycetales</taxon>
        <taxon>Saccharomycetaceae</taxon>
        <taxon>Saccharomyces</taxon>
    </lineage>
</organism>